<proteinExistence type="evidence at protein level"/>
<accession>P11314</accession>
<organismHost>
    <name type="scientific">Mammalia</name>
    <dbReference type="NCBI Taxonomy" id="40674"/>
</organismHost>
<protein>
    <recommendedName>
        <fullName>Inner capsid protein sigma-2</fullName>
        <shortName>Sigma2</shortName>
    </recommendedName>
</protein>
<comment type="function">
    <text>Inner capsid (core) component.</text>
</comment>
<comment type="subunit">
    <text evidence="1">Interacts with protein mu-NS; in viral inclusions.</text>
</comment>
<comment type="subcellular location">
    <subcellularLocation>
        <location evidence="2">Virion</location>
    </subcellularLocation>
    <text>Found in the inner capsid (150 copies).</text>
</comment>
<comment type="similarity">
    <text evidence="2">Belongs to the orthoreovirus sigma-1 protein family.</text>
</comment>
<comment type="sequence caution" evidence="2">
    <conflict type="frameshift">
        <sequence resource="EMBL-CDS" id="AAA47278"/>
    </conflict>
</comment>
<comment type="online information" name="Virus Particle ExploreR db">
    <link uri="https://viperdb.org/Info_Page.php?VDB=1ej6"/>
    <text>Icosahedral capsid structure</text>
</comment>
<name>SIGM2_REOVL</name>
<organism>
    <name type="scientific">Reovirus type 1 (strain Lang)</name>
    <name type="common">T1L</name>
    <name type="synonym">Mammalian orthoreovirus 1</name>
    <dbReference type="NCBI Taxonomy" id="10884"/>
    <lineage>
        <taxon>Viruses</taxon>
        <taxon>Riboviria</taxon>
        <taxon>Orthornavirae</taxon>
        <taxon>Duplornaviricota</taxon>
        <taxon>Resentoviricetes</taxon>
        <taxon>Reovirales</taxon>
        <taxon>Spinareoviridae</taxon>
        <taxon>Orthoreovirus</taxon>
        <taxon>Mammalian orthoreovirus</taxon>
    </lineage>
</organism>
<sequence>MARAAFLFKTVGFGGLQNVPINDELSSHLLRAGNSPWQLTQFLDWISLGRGLATSALVPTAGSRYYQMSCLLSGTLQIPFRPNHRWGDIRFLRLVWSAPTLDGLVVAPPQVLAQPALQAQADRVYDCDDYPFLARDPRFKHRVYQQLSAVTLLNLTGFGPISYVRVDEDMWSGDVNQLLMNYFGHTFAEIAYTLCQASANRPWEHDGTYARMTQIILSLFWLSYVGVIHQQNTYRTFYFQCNRRGDAAEVWILSCSLNHSAQIRPGNRSLFVMPTSPDWNMDVNLILSSTLTGCLCSGSQLPLIDNNSVPAVSRNIHGWTGRAGNQLHGFQVRRMVTEFCDRLRRDGVMTQAQQNQIEALADQTQQFKRDKLEAWAREDDQYNQANPNSTMFRTKPFTNAQWGRGNTGATSAAIAALI</sequence>
<reference key="1">
    <citation type="journal article" date="1991" name="J. Virol.">
        <title>The S2 gene nucleotide sequences of prototype strains of the three reovirus serotypes: characterization of reovirus core protein sigma 2.</title>
        <authorList>
            <person name="Dermody T.S."/>
            <person name="Schiff L.A."/>
            <person name="Nibert M.L."/>
            <person name="Coombs K.M."/>
            <person name="Fields B.N."/>
        </authorList>
    </citation>
    <scope>NUCLEOTIDE SEQUENCE [GENOMIC RNA]</scope>
</reference>
<reference key="2">
    <citation type="journal article" date="1987" name="Biochem. Biophys. Res. Commun.">
        <title>Biosynthesis of reovirus-specified polypeptides. Molecular cDNA cloning and nucleotide sequence of the reovirus serotype 1 Lang strain s2 mRNA which encodes the virion core polypeptide sigma 2.</title>
        <authorList>
            <person name="George C.X."/>
            <person name="Crowe A."/>
            <person name="Munemitsu S.M."/>
            <person name="Atwater J.A."/>
            <person name="Samuel C.E."/>
        </authorList>
    </citation>
    <scope>NUCLEOTIDE SEQUENCE [MRNA]</scope>
</reference>
<reference key="3">
    <citation type="journal article" date="2004" name="J. Virol.">
        <title>Reovirus nonstructural protein mu NS recruits viral core surface proteins and entering core particles to factory-like inclusions.</title>
        <authorList>
            <person name="Broering T.J."/>
            <person name="Kim J."/>
            <person name="Miller C.L."/>
            <person name="Piggott C.D."/>
            <person name="Dinoso J.B."/>
            <person name="Nibert M.L."/>
            <person name="Parker J.S.L."/>
        </authorList>
    </citation>
    <scope>INTERACTION WITH PROTEIN MU-NS</scope>
</reference>
<reference key="4">
    <citation type="journal article" date="2005" name="Structure">
        <title>Features of reovirus outer capsid protein mu1 revealed by electron cryomicroscopy and image reconstruction of the virion at 7.0 Angstrom resolution.</title>
        <authorList>
            <person name="Zhang X."/>
            <person name="Ji Y."/>
            <person name="Zhang L."/>
            <person name="Harrison S.C."/>
            <person name="Marinescu D.C."/>
            <person name="Nibert M.L."/>
            <person name="Baker T.S."/>
        </authorList>
    </citation>
    <scope>STRUCTURE BY ELECTRON MICROSCOPY (7.0 ANGSTROMS)</scope>
</reference>
<reference key="5">
    <citation type="journal article" date="2000" name="Nature">
        <title>Structure of the reovirus core at 3.6 A resolution.</title>
        <authorList>
            <person name="Reinisch K.M."/>
            <person name="Nibert M.L."/>
            <person name="Harrison S.C."/>
        </authorList>
    </citation>
    <scope>X-RAY CRYSTALLOGRAPHY (3.6 ANGSTROMS)</scope>
    <source>
        <strain>Reassortant F18</strain>
    </source>
</reference>
<gene>
    <name type="primary">S2</name>
</gene>
<keyword id="KW-0002">3D-structure</keyword>
<keyword id="KW-0167">Capsid protein</keyword>
<keyword id="KW-1153">Inner capsid protein</keyword>
<keyword id="KW-1185">Reference proteome</keyword>
<keyword id="KW-0946">Virion</keyword>
<feature type="chain" id="PRO_0000222751" description="Inner capsid protein sigma-2">
    <location>
        <begin position="1"/>
        <end position="418"/>
    </location>
</feature>
<feature type="sequence conflict" description="In Ref. 2; AAA47278." evidence="2" ref="2">
    <original>I</original>
    <variation>V</variation>
    <location>
        <position position="89"/>
    </location>
</feature>
<feature type="sequence conflict" description="In Ref. 2; AAA47278." evidence="2" ref="2">
    <original>H</original>
    <variation>Y</variation>
    <location>
        <position position="205"/>
    </location>
</feature>
<feature type="strand" evidence="3">
    <location>
        <begin position="14"/>
        <end position="18"/>
    </location>
</feature>
<feature type="helix" evidence="3">
    <location>
        <begin position="23"/>
        <end position="27"/>
    </location>
</feature>
<feature type="helix" evidence="3">
    <location>
        <begin position="39"/>
        <end position="44"/>
    </location>
</feature>
<feature type="turn" evidence="3">
    <location>
        <begin position="45"/>
        <end position="48"/>
    </location>
</feature>
<feature type="helix" evidence="3">
    <location>
        <begin position="61"/>
        <end position="76"/>
    </location>
</feature>
<feature type="turn" evidence="3">
    <location>
        <begin position="77"/>
        <end position="79"/>
    </location>
</feature>
<feature type="strand" evidence="3">
    <location>
        <begin position="91"/>
        <end position="97"/>
    </location>
</feature>
<feature type="strand" evidence="3">
    <location>
        <begin position="104"/>
        <end position="106"/>
    </location>
</feature>
<feature type="helix" evidence="3">
    <location>
        <begin position="109"/>
        <end position="113"/>
    </location>
</feature>
<feature type="strand" evidence="3">
    <location>
        <begin position="125"/>
        <end position="127"/>
    </location>
</feature>
<feature type="helix" evidence="3">
    <location>
        <begin position="132"/>
        <end position="134"/>
    </location>
</feature>
<feature type="helix" evidence="3">
    <location>
        <begin position="138"/>
        <end position="151"/>
    </location>
</feature>
<feature type="helix" evidence="3">
    <location>
        <begin position="152"/>
        <end position="155"/>
    </location>
</feature>
<feature type="strand" evidence="3">
    <location>
        <begin position="157"/>
        <end position="159"/>
    </location>
</feature>
<feature type="strand" evidence="3">
    <location>
        <begin position="162"/>
        <end position="164"/>
    </location>
</feature>
<feature type="helix" evidence="3">
    <location>
        <begin position="173"/>
        <end position="180"/>
    </location>
</feature>
<feature type="turn" evidence="3">
    <location>
        <begin position="181"/>
        <end position="184"/>
    </location>
</feature>
<feature type="helix" evidence="3">
    <location>
        <begin position="187"/>
        <end position="200"/>
    </location>
</feature>
<feature type="helix" evidence="3">
    <location>
        <begin position="208"/>
        <end position="224"/>
    </location>
</feature>
<feature type="strand" evidence="3">
    <location>
        <begin position="230"/>
        <end position="234"/>
    </location>
</feature>
<feature type="strand" evidence="3">
    <location>
        <begin position="237"/>
        <end position="245"/>
    </location>
</feature>
<feature type="strand" evidence="3">
    <location>
        <begin position="251"/>
        <end position="255"/>
    </location>
</feature>
<feature type="strand" evidence="3">
    <location>
        <begin position="270"/>
        <end position="272"/>
    </location>
</feature>
<feature type="strand" evidence="3">
    <location>
        <begin position="275"/>
        <end position="277"/>
    </location>
</feature>
<feature type="helix" evidence="3">
    <location>
        <begin position="278"/>
        <end position="280"/>
    </location>
</feature>
<feature type="helix" evidence="3">
    <location>
        <begin position="284"/>
        <end position="296"/>
    </location>
</feature>
<feature type="helix" evidence="3">
    <location>
        <begin position="311"/>
        <end position="313"/>
    </location>
</feature>
<feature type="turn" evidence="3">
    <location>
        <begin position="317"/>
        <end position="319"/>
    </location>
</feature>
<feature type="helix" evidence="3">
    <location>
        <begin position="332"/>
        <end position="346"/>
    </location>
</feature>
<feature type="helix" evidence="3">
    <location>
        <begin position="351"/>
        <end position="385"/>
    </location>
</feature>
<feature type="helix" evidence="3">
    <location>
        <begin position="399"/>
        <end position="402"/>
    </location>
</feature>
<feature type="helix" evidence="3">
    <location>
        <begin position="407"/>
        <end position="417"/>
    </location>
</feature>
<dbReference type="EMBL" id="L19774">
    <property type="protein sequence ID" value="AAA47239.1"/>
    <property type="molecule type" value="Genomic_RNA"/>
</dbReference>
<dbReference type="EMBL" id="M17598">
    <property type="protein sequence ID" value="AAA47278.1"/>
    <property type="status" value="ALT_FRAME"/>
    <property type="molecule type" value="mRNA"/>
</dbReference>
<dbReference type="PIR" id="A41306">
    <property type="entry name" value="FOXRL2"/>
</dbReference>
<dbReference type="PDB" id="1EJ6">
    <property type="method" value="X-ray"/>
    <property type="resolution" value="3.60 A"/>
    <property type="chains" value="D/E=1-418"/>
</dbReference>
<dbReference type="PDB" id="2CSE">
    <property type="method" value="EM"/>
    <property type="resolution" value="7.00 A"/>
    <property type="chains" value="X/Y/Z=1-418"/>
</dbReference>
<dbReference type="PDB" id="6XF8">
    <property type="method" value="EM"/>
    <property type="resolution" value="6.50 A"/>
    <property type="chains" value="E=2-418"/>
</dbReference>
<dbReference type="PDB" id="6ZTZ">
    <property type="method" value="EM"/>
    <property type="chains" value="D/P=2-418"/>
</dbReference>
<dbReference type="PDBsum" id="1EJ6"/>
<dbReference type="PDBsum" id="2CSE"/>
<dbReference type="PDBsum" id="6XF8"/>
<dbReference type="PDBsum" id="6ZTZ"/>
<dbReference type="EMDB" id="EMD-22166"/>
<dbReference type="SMR" id="P11314"/>
<dbReference type="BindingDB" id="P11314"/>
<dbReference type="EvolutionaryTrace" id="P11314"/>
<dbReference type="Proteomes" id="UP000007253">
    <property type="component" value="Genome"/>
</dbReference>
<dbReference type="GO" id="GO:0039625">
    <property type="term" value="C:viral inner capsid"/>
    <property type="evidence" value="ECO:0007669"/>
    <property type="project" value="UniProtKB-KW"/>
</dbReference>
<dbReference type="Gene3D" id="1.10.287.1520">
    <property type="match status" value="1"/>
</dbReference>
<dbReference type="InterPro" id="IPR004317">
    <property type="entry name" value="Sigma_1_2_reovir"/>
</dbReference>
<dbReference type="Pfam" id="PF03084">
    <property type="entry name" value="Sigma_1_2"/>
    <property type="match status" value="1"/>
</dbReference>
<evidence type="ECO:0000269" key="1">
    <source>
    </source>
</evidence>
<evidence type="ECO:0000305" key="2"/>
<evidence type="ECO:0007829" key="3">
    <source>
        <dbReference type="PDB" id="6ZTZ"/>
    </source>
</evidence>